<evidence type="ECO:0000255" key="1">
    <source>
        <dbReference type="HAMAP-Rule" id="MF_00006"/>
    </source>
</evidence>
<reference key="1">
    <citation type="submission" date="2008-07" db="EMBL/GenBank/DDBJ databases">
        <title>Complete sequence of Geobacter bemidjiensis BEM.</title>
        <authorList>
            <consortium name="US DOE Joint Genome Institute"/>
            <person name="Lucas S."/>
            <person name="Copeland A."/>
            <person name="Lapidus A."/>
            <person name="Glavina del Rio T."/>
            <person name="Dalin E."/>
            <person name="Tice H."/>
            <person name="Bruce D."/>
            <person name="Goodwin L."/>
            <person name="Pitluck S."/>
            <person name="Kiss H."/>
            <person name="Brettin T."/>
            <person name="Detter J.C."/>
            <person name="Han C."/>
            <person name="Kuske C.R."/>
            <person name="Schmutz J."/>
            <person name="Larimer F."/>
            <person name="Land M."/>
            <person name="Hauser L."/>
            <person name="Kyrpides N."/>
            <person name="Lykidis A."/>
            <person name="Lovley D."/>
            <person name="Richardson P."/>
        </authorList>
    </citation>
    <scope>NUCLEOTIDE SEQUENCE [LARGE SCALE GENOMIC DNA]</scope>
    <source>
        <strain>ATCC BAA-1014 / DSM 16622 / JCM 12645 / Bem</strain>
    </source>
</reference>
<dbReference type="EC" id="4.3.2.1" evidence="1"/>
<dbReference type="EMBL" id="CP001124">
    <property type="protein sequence ID" value="ACH40633.1"/>
    <property type="molecule type" value="Genomic_DNA"/>
</dbReference>
<dbReference type="RefSeq" id="WP_012532070.1">
    <property type="nucleotide sequence ID" value="NC_011146.1"/>
</dbReference>
<dbReference type="SMR" id="B5ED16"/>
<dbReference type="STRING" id="404380.Gbem_3641"/>
<dbReference type="KEGG" id="gbm:Gbem_3641"/>
<dbReference type="eggNOG" id="COG0165">
    <property type="taxonomic scope" value="Bacteria"/>
</dbReference>
<dbReference type="HOGENOM" id="CLU_027272_2_3_7"/>
<dbReference type="OrthoDB" id="9769623at2"/>
<dbReference type="UniPathway" id="UPA00068">
    <property type="reaction ID" value="UER00114"/>
</dbReference>
<dbReference type="Proteomes" id="UP000008825">
    <property type="component" value="Chromosome"/>
</dbReference>
<dbReference type="GO" id="GO:0005829">
    <property type="term" value="C:cytosol"/>
    <property type="evidence" value="ECO:0007669"/>
    <property type="project" value="TreeGrafter"/>
</dbReference>
<dbReference type="GO" id="GO:0004056">
    <property type="term" value="F:argininosuccinate lyase activity"/>
    <property type="evidence" value="ECO:0007669"/>
    <property type="project" value="UniProtKB-UniRule"/>
</dbReference>
<dbReference type="GO" id="GO:0042450">
    <property type="term" value="P:arginine biosynthetic process via ornithine"/>
    <property type="evidence" value="ECO:0007669"/>
    <property type="project" value="InterPro"/>
</dbReference>
<dbReference type="GO" id="GO:0006526">
    <property type="term" value="P:L-arginine biosynthetic process"/>
    <property type="evidence" value="ECO:0007669"/>
    <property type="project" value="UniProtKB-UniRule"/>
</dbReference>
<dbReference type="CDD" id="cd01359">
    <property type="entry name" value="Argininosuccinate_lyase"/>
    <property type="match status" value="1"/>
</dbReference>
<dbReference type="FunFam" id="1.10.275.10:FF:000002">
    <property type="entry name" value="Argininosuccinate lyase"/>
    <property type="match status" value="1"/>
</dbReference>
<dbReference type="FunFam" id="1.10.40.30:FF:000001">
    <property type="entry name" value="Argininosuccinate lyase"/>
    <property type="match status" value="1"/>
</dbReference>
<dbReference type="FunFam" id="1.20.200.10:FF:000002">
    <property type="entry name" value="Argininosuccinate lyase"/>
    <property type="match status" value="1"/>
</dbReference>
<dbReference type="Gene3D" id="1.10.40.30">
    <property type="entry name" value="Fumarase/aspartase (C-terminal domain)"/>
    <property type="match status" value="1"/>
</dbReference>
<dbReference type="Gene3D" id="1.20.200.10">
    <property type="entry name" value="Fumarase/aspartase (Central domain)"/>
    <property type="match status" value="1"/>
</dbReference>
<dbReference type="Gene3D" id="1.10.275.10">
    <property type="entry name" value="Fumarase/aspartase (N-terminal domain)"/>
    <property type="match status" value="1"/>
</dbReference>
<dbReference type="HAMAP" id="MF_00006">
    <property type="entry name" value="Arg_succ_lyase"/>
    <property type="match status" value="1"/>
</dbReference>
<dbReference type="InterPro" id="IPR029419">
    <property type="entry name" value="Arg_succ_lyase_C"/>
</dbReference>
<dbReference type="InterPro" id="IPR009049">
    <property type="entry name" value="Argininosuccinate_lyase"/>
</dbReference>
<dbReference type="InterPro" id="IPR024083">
    <property type="entry name" value="Fumarase/histidase_N"/>
</dbReference>
<dbReference type="InterPro" id="IPR020557">
    <property type="entry name" value="Fumarate_lyase_CS"/>
</dbReference>
<dbReference type="InterPro" id="IPR000362">
    <property type="entry name" value="Fumarate_lyase_fam"/>
</dbReference>
<dbReference type="InterPro" id="IPR022761">
    <property type="entry name" value="Fumarate_lyase_N"/>
</dbReference>
<dbReference type="InterPro" id="IPR008948">
    <property type="entry name" value="L-Aspartase-like"/>
</dbReference>
<dbReference type="NCBIfam" id="TIGR00838">
    <property type="entry name" value="argH"/>
    <property type="match status" value="1"/>
</dbReference>
<dbReference type="PANTHER" id="PTHR43814">
    <property type="entry name" value="ARGININOSUCCINATE LYASE"/>
    <property type="match status" value="1"/>
</dbReference>
<dbReference type="PANTHER" id="PTHR43814:SF1">
    <property type="entry name" value="ARGININOSUCCINATE LYASE"/>
    <property type="match status" value="1"/>
</dbReference>
<dbReference type="Pfam" id="PF14698">
    <property type="entry name" value="ASL_C2"/>
    <property type="match status" value="1"/>
</dbReference>
<dbReference type="Pfam" id="PF00206">
    <property type="entry name" value="Lyase_1"/>
    <property type="match status" value="1"/>
</dbReference>
<dbReference type="PRINTS" id="PR00145">
    <property type="entry name" value="ARGSUCLYASE"/>
</dbReference>
<dbReference type="PRINTS" id="PR00149">
    <property type="entry name" value="FUMRATELYASE"/>
</dbReference>
<dbReference type="SUPFAM" id="SSF48557">
    <property type="entry name" value="L-aspartase-like"/>
    <property type="match status" value="1"/>
</dbReference>
<dbReference type="PROSITE" id="PS00163">
    <property type="entry name" value="FUMARATE_LYASES"/>
    <property type="match status" value="1"/>
</dbReference>
<keyword id="KW-0028">Amino-acid biosynthesis</keyword>
<keyword id="KW-0055">Arginine biosynthesis</keyword>
<keyword id="KW-0963">Cytoplasm</keyword>
<keyword id="KW-0456">Lyase</keyword>
<keyword id="KW-1185">Reference proteome</keyword>
<gene>
    <name evidence="1" type="primary">argH</name>
    <name type="ordered locus">Gbem_3641</name>
</gene>
<name>ARLY_CITBB</name>
<proteinExistence type="inferred from homology"/>
<feature type="chain" id="PRO_1000089083" description="Argininosuccinate lyase">
    <location>
        <begin position="1"/>
        <end position="458"/>
    </location>
</feature>
<organism>
    <name type="scientific">Citrifermentans bemidjiense (strain ATCC BAA-1014 / DSM 16622 / JCM 12645 / Bem)</name>
    <name type="common">Geobacter bemidjiensis</name>
    <dbReference type="NCBI Taxonomy" id="404380"/>
    <lineage>
        <taxon>Bacteria</taxon>
        <taxon>Pseudomonadati</taxon>
        <taxon>Thermodesulfobacteriota</taxon>
        <taxon>Desulfuromonadia</taxon>
        <taxon>Geobacterales</taxon>
        <taxon>Geobacteraceae</taxon>
        <taxon>Citrifermentans</taxon>
    </lineage>
</organism>
<protein>
    <recommendedName>
        <fullName evidence="1">Argininosuccinate lyase</fullName>
        <shortName evidence="1">ASAL</shortName>
        <ecNumber evidence="1">4.3.2.1</ecNumber>
    </recommendedName>
    <alternativeName>
        <fullName evidence="1">Arginosuccinase</fullName>
    </alternativeName>
</protein>
<comment type="catalytic activity">
    <reaction evidence="1">
        <text>2-(N(omega)-L-arginino)succinate = fumarate + L-arginine</text>
        <dbReference type="Rhea" id="RHEA:24020"/>
        <dbReference type="ChEBI" id="CHEBI:29806"/>
        <dbReference type="ChEBI" id="CHEBI:32682"/>
        <dbReference type="ChEBI" id="CHEBI:57472"/>
        <dbReference type="EC" id="4.3.2.1"/>
    </reaction>
</comment>
<comment type="pathway">
    <text evidence="1">Amino-acid biosynthesis; L-arginine biosynthesis; L-arginine from L-ornithine and carbamoyl phosphate: step 3/3.</text>
</comment>
<comment type="subcellular location">
    <subcellularLocation>
        <location evidence="1">Cytoplasm</location>
    </subcellularLocation>
</comment>
<comment type="similarity">
    <text evidence="1">Belongs to the lyase 1 family. Argininosuccinate lyase subfamily.</text>
</comment>
<accession>B5ED16</accession>
<sequence>MSKDKLWGGRFTQPTDKFVEEFTASINFDKRLYHQDIRGSIAHATMLGKQGIIPVADVESIVSGLKTILEQIEAGEFDFSVSLEDIHMNIEARLSEKIGDAGKRLHTGRSRNDQVALDIRLYLRDELVEVSAYIDLLIDAIIHQAEENLGVIMPGFTHLQTAQPILFSHHMMAYHEMLKRDKARMEDCLKRTNVLPLGAGALAGTTFPIDREYVAELLDFDGVTRNSLDSVSDRDFAMEFCAASSILMVHLSRFSEELILWSTSEFKFVELSDSFCTGSSIMPQKKNPDVPELVRGKTGRVNGNLVALLTLMKSLPLAYNKDMQEDKEPLFDTIDTVKGCLKVFADMVREMKINPERMKTAAAAGFSTATDVADYLVRKGIPFRDAHEIVGKTVRYCIENEMDIPELSLAEWQLFSGRIEEDIFESITLQASVNARRATGGTALERVRAEIARAKEGR</sequence>